<name>MOV10_HUMAN</name>
<organism>
    <name type="scientific">Homo sapiens</name>
    <name type="common">Human</name>
    <dbReference type="NCBI Taxonomy" id="9606"/>
    <lineage>
        <taxon>Eukaryota</taxon>
        <taxon>Metazoa</taxon>
        <taxon>Chordata</taxon>
        <taxon>Craniata</taxon>
        <taxon>Vertebrata</taxon>
        <taxon>Euteleostomi</taxon>
        <taxon>Mammalia</taxon>
        <taxon>Eutheria</taxon>
        <taxon>Euarchontoglires</taxon>
        <taxon>Primates</taxon>
        <taxon>Haplorrhini</taxon>
        <taxon>Catarrhini</taxon>
        <taxon>Hominidae</taxon>
        <taxon>Homo</taxon>
    </lineage>
</organism>
<sequence length="1003" mass="113671">MPSKFSCRQLREAGQCFESFLVVRGLDMETDRERLRTIYNRDFKISFGTPAPGFSSMLYGMKIANLAYVTKTRVRFFRLDRWADVRFPEKRRMKLGSDISKHHKSLLAKIFYDRAEYLHGKHGVDVEVQGPHEARDGQLLIRLDLNRKEVLTLRLRNGGTQSVTLTHLFPLCRTPQFAFYNEDQELPCPLGPGECYELHVHCKTSFVGYFPATVLWELLGPGESGSEGAGTFYIARFLAAVAHSPLAAQLKPMTPFKRTRITGNPVVTNRIEEGERPDRAKGYDLELSMALGTYYPPPRLRQLLPMLLQGTSIFTAPKEIAEIKAQLETALKWRNYEVKLRLLLHLEELQMEHDIRHYDLESVPMTWDPVDQNPRLLTLEVPGVTESRPSVLRGDHLFALLSSETHQEDPITYKGFVHKVELDRVKLSFSMSLLSRFVDGLTFKVNFTFNRQPLRVQHRALELTGRWLLWPMLFPVAPRDVPLLPSDVKLKLYDRSLESNPEQLQAMRHIVTGTTRPAPYIIFGPPGTGKTVTLVEAIKQVVKHLPKAHILACAPSNSGADLLCQRLRVHLPSSIYRLLAPSRDIRMVPEDIKPCCNWDAKKGEYVFPAKKKLQEYRVLITTLITAGRLVSAQFPIDHFTHIFIDEAGHCMEPESLVAIAGLMEVKETGDPGGQLVLAGDPRQLGPVLRSPLTQKHGLGYSLLERLLTYNSLYKKGPDGYDPQFITKLLRNYRSHPTILDIPNQLYYEGELQACADVVDRERFCRWAGLPRQGFPIIFHGVMGKDEREGNSPSFFNPEEAATVTSYLKLLLAPSSKKGKARLSPRSVGVISPYRKQVEKIRYCITKLDRELRGLDDIKDLKVGSVEEFQGQERSVILISTVRSSQSFVQLDLDFNLGFLKNPKRFNVAVTRAKALLIIVGNPLLLGHDPDWKVFLEFCKENGGYTGCPFPAKLDLQQGQNLLQGLSKLSPSTSGPHSHDYLPQEREGEGGLSLQVEPEWRNEL</sequence>
<proteinExistence type="evidence at protein level"/>
<dbReference type="EC" id="3.6.4.13" evidence="11"/>
<dbReference type="EMBL" id="AB046851">
    <property type="protein sequence ID" value="BAB13457.1"/>
    <property type="status" value="ALT_SEQ"/>
    <property type="molecule type" value="mRNA"/>
</dbReference>
<dbReference type="EMBL" id="AK074174">
    <property type="protein sequence ID" value="BAB85000.1"/>
    <property type="status" value="ALT_INIT"/>
    <property type="molecule type" value="mRNA"/>
</dbReference>
<dbReference type="EMBL" id="AL833353">
    <property type="status" value="NOT_ANNOTATED_CDS"/>
    <property type="molecule type" value="mRNA"/>
</dbReference>
<dbReference type="EMBL" id="AL603832">
    <property type="status" value="NOT_ANNOTATED_CDS"/>
    <property type="molecule type" value="Genomic_DNA"/>
</dbReference>
<dbReference type="EMBL" id="BC002548">
    <property type="protein sequence ID" value="AAH02548.1"/>
    <property type="molecule type" value="mRNA"/>
</dbReference>
<dbReference type="EMBL" id="BC004499">
    <property type="protein sequence ID" value="AAH04499.2"/>
    <property type="molecule type" value="mRNA"/>
</dbReference>
<dbReference type="EMBL" id="BC009312">
    <property type="protein sequence ID" value="AAH09312.1"/>
    <property type="molecule type" value="mRNA"/>
</dbReference>
<dbReference type="CCDS" id="CCDS853.1">
    <molecule id="Q9HCE1-1"/>
</dbReference>
<dbReference type="RefSeq" id="NP_001123551.1">
    <molecule id="Q9HCE1-1"/>
    <property type="nucleotide sequence ID" value="NM_001130079.3"/>
</dbReference>
<dbReference type="RefSeq" id="NP_001273001.1">
    <property type="nucleotide sequence ID" value="NM_001286072.1"/>
</dbReference>
<dbReference type="RefSeq" id="NP_001308253.1">
    <molecule id="Q9HCE1-1"/>
    <property type="nucleotide sequence ID" value="NM_001321324.2"/>
</dbReference>
<dbReference type="RefSeq" id="NP_001356436.1">
    <molecule id="Q9HCE1-1"/>
    <property type="nucleotide sequence ID" value="NM_001369507.1"/>
</dbReference>
<dbReference type="RefSeq" id="NP_066014.1">
    <molecule id="Q9HCE1-1"/>
    <property type="nucleotide sequence ID" value="NM_020963.5"/>
</dbReference>
<dbReference type="RefSeq" id="XP_005270926.1">
    <property type="nucleotide sequence ID" value="XM_005270869.4"/>
</dbReference>
<dbReference type="RefSeq" id="XP_005270927.1">
    <property type="nucleotide sequence ID" value="XM_005270870.4"/>
</dbReference>
<dbReference type="RefSeq" id="XP_016856807.1">
    <property type="nucleotide sequence ID" value="XM_017001318.1"/>
</dbReference>
<dbReference type="SMR" id="Q9HCE1"/>
<dbReference type="BioGRID" id="110484">
    <property type="interactions" value="1322"/>
</dbReference>
<dbReference type="CORUM" id="Q9HCE1"/>
<dbReference type="DIP" id="DIP-44158N"/>
<dbReference type="FunCoup" id="Q9HCE1">
    <property type="interactions" value="1279"/>
</dbReference>
<dbReference type="IntAct" id="Q9HCE1">
    <property type="interactions" value="195"/>
</dbReference>
<dbReference type="MINT" id="Q9HCE1"/>
<dbReference type="STRING" id="9606.ENSP00000399797"/>
<dbReference type="CarbonylDB" id="Q9HCE1"/>
<dbReference type="GlyGen" id="Q9HCE1">
    <property type="glycosylation" value="2 sites, 1 O-linked glycan (1 site)"/>
</dbReference>
<dbReference type="iPTMnet" id="Q9HCE1"/>
<dbReference type="MetOSite" id="Q9HCE1"/>
<dbReference type="PhosphoSitePlus" id="Q9HCE1"/>
<dbReference type="SwissPalm" id="Q9HCE1"/>
<dbReference type="BioMuta" id="MOV10"/>
<dbReference type="DMDM" id="24638063"/>
<dbReference type="jPOST" id="Q9HCE1"/>
<dbReference type="MassIVE" id="Q9HCE1"/>
<dbReference type="PaxDb" id="9606-ENSP00000399797"/>
<dbReference type="PeptideAtlas" id="Q9HCE1"/>
<dbReference type="ProteomicsDB" id="81683">
    <molecule id="Q9HCE1-1"/>
</dbReference>
<dbReference type="ProteomicsDB" id="81684">
    <molecule id="Q9HCE1-2"/>
</dbReference>
<dbReference type="ProteomicsDB" id="81685">
    <molecule id="Q9HCE1-3"/>
</dbReference>
<dbReference type="Pumba" id="Q9HCE1"/>
<dbReference type="Antibodypedia" id="20136">
    <property type="antibodies" value="172 antibodies from 26 providers"/>
</dbReference>
<dbReference type="DNASU" id="4343"/>
<dbReference type="Ensembl" id="ENST00000357443.2">
    <molecule id="Q9HCE1-1"/>
    <property type="protein sequence ID" value="ENSP00000350028.2"/>
    <property type="gene ID" value="ENSG00000155363.19"/>
</dbReference>
<dbReference type="Ensembl" id="ENST00000369645.6">
    <molecule id="Q9HCE1-1"/>
    <property type="protein sequence ID" value="ENSP00000358659.1"/>
    <property type="gene ID" value="ENSG00000155363.19"/>
</dbReference>
<dbReference type="Ensembl" id="ENST00000413052.6">
    <molecule id="Q9HCE1-1"/>
    <property type="protein sequence ID" value="ENSP00000399797.2"/>
    <property type="gene ID" value="ENSG00000155363.19"/>
</dbReference>
<dbReference type="GeneID" id="4343"/>
<dbReference type="KEGG" id="hsa:4343"/>
<dbReference type="MANE-Select" id="ENST00000369645.6">
    <property type="protein sequence ID" value="ENSP00000358659.1"/>
    <property type="RefSeq nucleotide sequence ID" value="NM_001321324.2"/>
    <property type="RefSeq protein sequence ID" value="NP_001308253.1"/>
</dbReference>
<dbReference type="UCSC" id="uc001ecn.5">
    <molecule id="Q9HCE1-1"/>
    <property type="organism name" value="human"/>
</dbReference>
<dbReference type="AGR" id="HGNC:7200"/>
<dbReference type="CTD" id="4343"/>
<dbReference type="DisGeNET" id="4343"/>
<dbReference type="GeneCards" id="MOV10"/>
<dbReference type="HGNC" id="HGNC:7200">
    <property type="gene designation" value="MOV10"/>
</dbReference>
<dbReference type="HPA" id="ENSG00000155363">
    <property type="expression patterns" value="Low tissue specificity"/>
</dbReference>
<dbReference type="MIM" id="610742">
    <property type="type" value="gene"/>
</dbReference>
<dbReference type="neXtProt" id="NX_Q9HCE1"/>
<dbReference type="OpenTargets" id="ENSG00000155363"/>
<dbReference type="PharmGKB" id="PA30908"/>
<dbReference type="VEuPathDB" id="HostDB:ENSG00000155363"/>
<dbReference type="eggNOG" id="KOG1804">
    <property type="taxonomic scope" value="Eukaryota"/>
</dbReference>
<dbReference type="GeneTree" id="ENSGT00940000156024"/>
<dbReference type="InParanoid" id="Q9HCE1"/>
<dbReference type="OMA" id="NDWDQDQ"/>
<dbReference type="OrthoDB" id="6513042at2759"/>
<dbReference type="PAN-GO" id="Q9HCE1">
    <property type="GO annotations" value="4 GO annotations based on evolutionary models"/>
</dbReference>
<dbReference type="PhylomeDB" id="Q9HCE1"/>
<dbReference type="TreeFam" id="TF323999"/>
<dbReference type="PathwayCommons" id="Q9HCE1"/>
<dbReference type="Reactome" id="R-HSA-1912408">
    <property type="pathway name" value="Pre-NOTCH Transcription and Translation"/>
</dbReference>
<dbReference type="Reactome" id="R-HSA-2559580">
    <property type="pathway name" value="Oxidative Stress Induced Senescence"/>
</dbReference>
<dbReference type="Reactome" id="R-HSA-2559585">
    <property type="pathway name" value="Oncogene Induced Senescence"/>
</dbReference>
<dbReference type="Reactome" id="R-HSA-4086398">
    <property type="pathway name" value="Ca2+ pathway"/>
</dbReference>
<dbReference type="Reactome" id="R-HSA-5628897">
    <property type="pathway name" value="TP53 Regulates Metabolic Genes"/>
</dbReference>
<dbReference type="Reactome" id="R-HSA-5687128">
    <property type="pathway name" value="MAPK6/MAPK4 signaling"/>
</dbReference>
<dbReference type="Reactome" id="R-HSA-8853884">
    <property type="pathway name" value="Transcriptional Regulation by VENTX"/>
</dbReference>
<dbReference type="Reactome" id="R-HSA-8934593">
    <property type="pathway name" value="Regulation of RUNX1 Expression and Activity"/>
</dbReference>
<dbReference type="Reactome" id="R-HSA-8936459">
    <property type="pathway name" value="RUNX1 regulates genes involved in megakaryocyte differentiation and platelet function"/>
</dbReference>
<dbReference type="Reactome" id="R-HSA-8943723">
    <property type="pathway name" value="Regulation of PTEN mRNA translation"/>
</dbReference>
<dbReference type="Reactome" id="R-HSA-8948700">
    <property type="pathway name" value="Competing endogenous RNAs (ceRNAs) regulate PTEN translation"/>
</dbReference>
<dbReference type="Reactome" id="R-HSA-8986944">
    <property type="pathway name" value="Transcriptional Regulation by MECP2"/>
</dbReference>
<dbReference type="Reactome" id="R-HSA-9018519">
    <property type="pathway name" value="Estrogen-dependent gene expression"/>
</dbReference>
<dbReference type="Reactome" id="R-HSA-9022692">
    <property type="pathway name" value="Regulation of MECP2 expression and activity"/>
</dbReference>
<dbReference type="Reactome" id="R-HSA-9029569">
    <property type="pathway name" value="NR1H3 &amp; NR1H2 regulate gene expression linked to cholesterol transport and efflux"/>
</dbReference>
<dbReference type="Reactome" id="R-HSA-9725371">
    <property type="pathway name" value="Nuclear events stimulated by ALK signaling in cancer"/>
</dbReference>
<dbReference type="Reactome" id="R-HSA-9759811">
    <property type="pathway name" value="Regulation of CDH11 mRNA translation by microRNAs"/>
</dbReference>
<dbReference type="Reactome" id="R-HSA-9768778">
    <property type="pathway name" value="Regulation of NPAS4 mRNA translation"/>
</dbReference>
<dbReference type="Reactome" id="R-HSA-9824594">
    <property type="pathway name" value="Regulation of MITF-M-dependent genes involved in apoptosis"/>
</dbReference>
<dbReference type="Reactome" id="R-HSA-9839394">
    <property type="pathway name" value="TGFBR3 expression"/>
</dbReference>
<dbReference type="SignaLink" id="Q9HCE1"/>
<dbReference type="SIGNOR" id="Q9HCE1"/>
<dbReference type="BioGRID-ORCS" id="4343">
    <property type="hits" value="15 hits in 1169 CRISPR screens"/>
</dbReference>
<dbReference type="CD-CODE" id="232F8A39">
    <property type="entry name" value="P-body"/>
</dbReference>
<dbReference type="CD-CODE" id="DEE660B4">
    <property type="entry name" value="Stress granule"/>
</dbReference>
<dbReference type="ChiTaRS" id="MOV10">
    <property type="organism name" value="human"/>
</dbReference>
<dbReference type="GeneWiki" id="MOV10"/>
<dbReference type="GenomeRNAi" id="4343"/>
<dbReference type="Pharos" id="Q9HCE1">
    <property type="development level" value="Tbio"/>
</dbReference>
<dbReference type="PRO" id="PR:Q9HCE1"/>
<dbReference type="Proteomes" id="UP000005640">
    <property type="component" value="Chromosome 1"/>
</dbReference>
<dbReference type="RNAct" id="Q9HCE1">
    <property type="molecule type" value="protein"/>
</dbReference>
<dbReference type="Bgee" id="ENSG00000155363">
    <property type="expression patterns" value="Expressed in right testis and 162 other cell types or tissues"/>
</dbReference>
<dbReference type="ExpressionAtlas" id="Q9HCE1">
    <property type="expression patterns" value="baseline and differential"/>
</dbReference>
<dbReference type="GO" id="GO:0036464">
    <property type="term" value="C:cytoplasmic ribonucleoprotein granule"/>
    <property type="evidence" value="ECO:0000314"/>
    <property type="project" value="UniProtKB"/>
</dbReference>
<dbReference type="GO" id="GO:0010494">
    <property type="term" value="C:cytoplasmic stress granule"/>
    <property type="evidence" value="ECO:0007669"/>
    <property type="project" value="UniProtKB-SubCell"/>
</dbReference>
<dbReference type="GO" id="GO:0005829">
    <property type="term" value="C:cytosol"/>
    <property type="evidence" value="ECO:0000314"/>
    <property type="project" value="HPA"/>
</dbReference>
<dbReference type="GO" id="GO:0005615">
    <property type="term" value="C:extracellular space"/>
    <property type="evidence" value="ECO:0007005"/>
    <property type="project" value="UniProtKB"/>
</dbReference>
<dbReference type="GO" id="GO:0005634">
    <property type="term" value="C:nucleus"/>
    <property type="evidence" value="ECO:0000250"/>
    <property type="project" value="UniProtKB"/>
</dbReference>
<dbReference type="GO" id="GO:0043186">
    <property type="term" value="C:P granule"/>
    <property type="evidence" value="ECO:0000318"/>
    <property type="project" value="GO_Central"/>
</dbReference>
<dbReference type="GO" id="GO:0000932">
    <property type="term" value="C:P-body"/>
    <property type="evidence" value="ECO:0000314"/>
    <property type="project" value="UniProtKB"/>
</dbReference>
<dbReference type="GO" id="GO:0032574">
    <property type="term" value="F:5'-3' RNA helicase activity"/>
    <property type="evidence" value="ECO:0000314"/>
    <property type="project" value="UniProtKB"/>
</dbReference>
<dbReference type="GO" id="GO:0005524">
    <property type="term" value="F:ATP binding"/>
    <property type="evidence" value="ECO:0007669"/>
    <property type="project" value="UniProtKB-KW"/>
</dbReference>
<dbReference type="GO" id="GO:0016887">
    <property type="term" value="F:ATP hydrolysis activity"/>
    <property type="evidence" value="ECO:0007669"/>
    <property type="project" value="RHEA"/>
</dbReference>
<dbReference type="GO" id="GO:0003723">
    <property type="term" value="F:RNA binding"/>
    <property type="evidence" value="ECO:0000314"/>
    <property type="project" value="UniProtKB"/>
</dbReference>
<dbReference type="GO" id="GO:0061158">
    <property type="term" value="P:3'-UTR-mediated mRNA destabilization"/>
    <property type="evidence" value="ECO:0000314"/>
    <property type="project" value="UniProtKB"/>
</dbReference>
<dbReference type="GO" id="GO:0051607">
    <property type="term" value="P:defense response to virus"/>
    <property type="evidence" value="ECO:0000315"/>
    <property type="project" value="UniProtKB"/>
</dbReference>
<dbReference type="GO" id="GO:0035279">
    <property type="term" value="P:miRNA-mediated gene silencing by mRNA destabilization"/>
    <property type="evidence" value="ECO:0000314"/>
    <property type="project" value="UniProtKB"/>
</dbReference>
<dbReference type="GO" id="GO:0035195">
    <property type="term" value="P:miRNA-mediated post-transcriptional gene silencing"/>
    <property type="evidence" value="ECO:0000315"/>
    <property type="project" value="UniProtKB"/>
</dbReference>
<dbReference type="GO" id="GO:0061014">
    <property type="term" value="P:positive regulation of mRNA catabolic process"/>
    <property type="evidence" value="ECO:0000314"/>
    <property type="project" value="UniProtKB"/>
</dbReference>
<dbReference type="GO" id="GO:0150011">
    <property type="term" value="P:regulation of neuron projection arborization"/>
    <property type="evidence" value="ECO:0000250"/>
    <property type="project" value="UniProtKB"/>
</dbReference>
<dbReference type="GO" id="GO:0035194">
    <property type="term" value="P:regulatory ncRNA-mediated post-transcriptional gene silencing"/>
    <property type="evidence" value="ECO:0000318"/>
    <property type="project" value="GO_Central"/>
</dbReference>
<dbReference type="GO" id="GO:0010526">
    <property type="term" value="P:transposable element silencing"/>
    <property type="evidence" value="ECO:0000314"/>
    <property type="project" value="UniProtKB"/>
</dbReference>
<dbReference type="GO" id="GO:0141008">
    <property type="term" value="P:transposable element silencing by mRNA destabilization"/>
    <property type="evidence" value="ECO:0000314"/>
    <property type="project" value="UniProtKB"/>
</dbReference>
<dbReference type="CDD" id="cd18038">
    <property type="entry name" value="DEXXQc_Helz-like"/>
    <property type="match status" value="1"/>
</dbReference>
<dbReference type="CDD" id="cd18808">
    <property type="entry name" value="SF1_C_Upf1"/>
    <property type="match status" value="1"/>
</dbReference>
<dbReference type="FunFam" id="3.40.50.300:FF:000608">
    <property type="entry name" value="Mov10 RISC complex RNA helicase"/>
    <property type="match status" value="1"/>
</dbReference>
<dbReference type="FunFam" id="3.40.50.300:FF:000758">
    <property type="entry name" value="Mov10 RISC complex RNA helicase"/>
    <property type="match status" value="1"/>
</dbReference>
<dbReference type="Gene3D" id="3.40.50.300">
    <property type="entry name" value="P-loop containing nucleotide triphosphate hydrolases"/>
    <property type="match status" value="2"/>
</dbReference>
<dbReference type="InterPro" id="IPR041679">
    <property type="entry name" value="DNA2/NAM7-like_C"/>
</dbReference>
<dbReference type="InterPro" id="IPR041677">
    <property type="entry name" value="DNA2/NAM7_AAA_11"/>
</dbReference>
<dbReference type="InterPro" id="IPR049080">
    <property type="entry name" value="MOV-10-like_beta-barrel"/>
</dbReference>
<dbReference type="InterPro" id="IPR026122">
    <property type="entry name" value="MOV-10/SDE3_DEXXQ/H-box"/>
</dbReference>
<dbReference type="InterPro" id="IPR049079">
    <property type="entry name" value="Mov-10_helical"/>
</dbReference>
<dbReference type="InterPro" id="IPR049077">
    <property type="entry name" value="MOV-10_Ig-like"/>
</dbReference>
<dbReference type="InterPro" id="IPR049075">
    <property type="entry name" value="MOV-10_N"/>
</dbReference>
<dbReference type="InterPro" id="IPR027417">
    <property type="entry name" value="P-loop_NTPase"/>
</dbReference>
<dbReference type="InterPro" id="IPR047187">
    <property type="entry name" value="SF1_C_Upf1"/>
</dbReference>
<dbReference type="PANTHER" id="PTHR45418">
    <property type="entry name" value="CANCER/TESTIS ANTIGEN 55"/>
    <property type="match status" value="1"/>
</dbReference>
<dbReference type="PANTHER" id="PTHR45418:SF1">
    <property type="entry name" value="CANCER_TESTIS ANTIGEN 55"/>
    <property type="match status" value="1"/>
</dbReference>
<dbReference type="Pfam" id="PF13086">
    <property type="entry name" value="AAA_11"/>
    <property type="match status" value="2"/>
</dbReference>
<dbReference type="Pfam" id="PF13087">
    <property type="entry name" value="AAA_12"/>
    <property type="match status" value="1"/>
</dbReference>
<dbReference type="Pfam" id="PF21634">
    <property type="entry name" value="MOV-10_beta-barrel"/>
    <property type="match status" value="1"/>
</dbReference>
<dbReference type="Pfam" id="PF21635">
    <property type="entry name" value="Mov-10_helical"/>
    <property type="match status" value="1"/>
</dbReference>
<dbReference type="Pfam" id="PF21633">
    <property type="entry name" value="MOV-10_Ig-like"/>
    <property type="match status" value="1"/>
</dbReference>
<dbReference type="Pfam" id="PF21632">
    <property type="entry name" value="MOV-10_N"/>
    <property type="match status" value="1"/>
</dbReference>
<dbReference type="SUPFAM" id="SSF52540">
    <property type="entry name" value="P-loop containing nucleoside triphosphate hydrolases"/>
    <property type="match status" value="1"/>
</dbReference>
<keyword id="KW-0007">Acetylation</keyword>
<keyword id="KW-0025">Alternative splicing</keyword>
<keyword id="KW-0067">ATP-binding</keyword>
<keyword id="KW-0963">Cytoplasm</keyword>
<keyword id="KW-0347">Helicase</keyword>
<keyword id="KW-0945">Host-virus interaction</keyword>
<keyword id="KW-0378">Hydrolase</keyword>
<keyword id="KW-0547">Nucleotide-binding</keyword>
<keyword id="KW-0539">Nucleus</keyword>
<keyword id="KW-0597">Phosphoprotein</keyword>
<keyword id="KW-1267">Proteomics identification</keyword>
<keyword id="KW-1185">Reference proteome</keyword>
<keyword id="KW-0694">RNA-binding</keyword>
<keyword id="KW-0943">RNA-mediated gene silencing</keyword>
<keyword id="KW-0804">Transcription</keyword>
<keyword id="KW-0805">Transcription regulation</keyword>
<keyword id="KW-0832">Ubl conjugation</keyword>
<evidence type="ECO:0000250" key="1"/>
<evidence type="ECO:0000250" key="2">
    <source>
        <dbReference type="UniProtKB" id="P23249"/>
    </source>
</evidence>
<evidence type="ECO:0000256" key="3">
    <source>
        <dbReference type="SAM" id="MobiDB-lite"/>
    </source>
</evidence>
<evidence type="ECO:0000269" key="4">
    <source>
    </source>
</evidence>
<evidence type="ECO:0000269" key="5">
    <source>
    </source>
</evidence>
<evidence type="ECO:0000269" key="6">
    <source>
    </source>
</evidence>
<evidence type="ECO:0000269" key="7">
    <source>
    </source>
</evidence>
<evidence type="ECO:0000269" key="8">
    <source>
    </source>
</evidence>
<evidence type="ECO:0000269" key="9">
    <source>
    </source>
</evidence>
<evidence type="ECO:0000269" key="10">
    <source>
    </source>
</evidence>
<evidence type="ECO:0000269" key="11">
    <source>
    </source>
</evidence>
<evidence type="ECO:0000269" key="12">
    <source>
    </source>
</evidence>
<evidence type="ECO:0000269" key="13">
    <source>
    </source>
</evidence>
<evidence type="ECO:0000269" key="14">
    <source>
    </source>
</evidence>
<evidence type="ECO:0000269" key="15">
    <source>
    </source>
</evidence>
<evidence type="ECO:0000269" key="16">
    <source>
    </source>
</evidence>
<evidence type="ECO:0000269" key="17">
    <source>
    </source>
</evidence>
<evidence type="ECO:0000269" key="18">
    <source>
    </source>
</evidence>
<evidence type="ECO:0000269" key="19">
    <source>
    </source>
</evidence>
<evidence type="ECO:0000269" key="20">
    <source>
    </source>
</evidence>
<evidence type="ECO:0000303" key="21">
    <source>
    </source>
</evidence>
<evidence type="ECO:0000303" key="22">
    <source>
    </source>
</evidence>
<evidence type="ECO:0000303" key="23">
    <source ref="3"/>
</evidence>
<evidence type="ECO:0000305" key="24"/>
<evidence type="ECO:0000312" key="25">
    <source>
        <dbReference type="HGNC" id="HGNC:7200"/>
    </source>
</evidence>
<evidence type="ECO:0007744" key="26">
    <source>
    </source>
</evidence>
<evidence type="ECO:0007744" key="27">
    <source>
    </source>
</evidence>
<evidence type="ECO:0007744" key="28">
    <source>
    </source>
</evidence>
<evidence type="ECO:0007744" key="29">
    <source>
    </source>
</evidence>
<evidence type="ECO:0007744" key="30">
    <source>
    </source>
</evidence>
<evidence type="ECO:0007744" key="31">
    <source>
    </source>
</evidence>
<comment type="function">
    <text evidence="2 4 5 7 8 9 11 13 14 15 16 17 18 20">5' to 3' RNA helicase that is involved in a number of cellular roles ranging from mRNA metabolism and translation, modulation of viral infectivity, inhibition of retrotransposition, or regulation of synaptic transmission (PubMed:23093941). Plays an important role in innate antiviral immunity by promoting type I interferon production (PubMed:27016603, PubMed:27974568, PubMed:35157734). Mechanistically, specifically uses IKKepsilon/IKBKE as the mediator kinase for IRF3 activation (PubMed:27016603, PubMed:35157734). Blocks HIV-1 virus replication at a post-entry step (PubMed:20215113). Counteracts HIV-1 Vif-mediated degradation of APOBEC3G through its helicase activity by interfering with the ubiquitin-proteasome pathway (PubMed:29258557). Also inhibits hepatitis B virus/HBV replication by interacting with HBV RNA and thereby inhibiting the early step of viral reverse transcription (PubMed:31722967). Contributes to UPF1 mRNA target degradation by translocation along 3' UTRs (PubMed:24726324). Required for microRNA (miRNA)-mediated gene silencing by the RNA-induced silencing complex (RISC). Required for both miRNA-mediated translational repression and miRNA-mediated cleavage of complementary mRNAs by RISC (PubMed:16289642, PubMed:17507929, PubMed:22791714). In cooperation with FMR1, regulates miRNA-mediated translational repression by AGO2 (PubMed:25464849). Restricts retrotransposition of long interspersed element-1 (LINE-1) in cooperation with TUT4 and TUT7 counteracting the RNA chaperonne activity of L1RE1 (PubMed:23093941, PubMed:30122351). Facilitates LINE-1 uridylation by TUT4 and TUT7 (PubMed:30122351). Required for embryonic viability and for normal central nervous system development and function. Plays two critical roles in early brain development: suppresses retroelements in the nucleus by directly inhibiting cDNA synthesis, while regulates cytoskeletal mRNAs to influence neurite outgrowth in the cytosol (By similarity). May function as a messenger ribonucleoprotein (mRNP) clearance factor (PubMed:24726324).</text>
</comment>
<comment type="function">
    <text evidence="6">(Microbial infection) Required for RNA-directed transcription and replication of the human hepatitis delta virus (HDV). Interacts with small capped HDV RNAs derived from genomic hairpin structures that mark the initiation sites of RNA-dependent HDV RNA transcription.</text>
</comment>
<comment type="catalytic activity">
    <reaction evidence="11">
        <text>ATP + H2O = ADP + phosphate + H(+)</text>
        <dbReference type="Rhea" id="RHEA:13065"/>
        <dbReference type="ChEBI" id="CHEBI:15377"/>
        <dbReference type="ChEBI" id="CHEBI:15378"/>
        <dbReference type="ChEBI" id="CHEBI:30616"/>
        <dbReference type="ChEBI" id="CHEBI:43474"/>
        <dbReference type="ChEBI" id="CHEBI:456216"/>
        <dbReference type="EC" id="3.6.4.13"/>
    </reaction>
</comment>
<comment type="subunit">
    <text evidence="2 4 5 8 9 10 11 12 13 14 15 17 20">Interacts with DICER1, AGO2, TARBP2, EIF6 and RPL7A (60S ribosome subunit); they form a large RNA-induced silencing complex (RISC) (PubMed:17507929). Interacts with APOBEC3G in an RNA-dependent manner. Interacts with TRIM71 (via NHL repeats) in an RNA-dependent manner (PubMed:23125361). Interacts with both protein products of LIRE1, ORF1p and ORF2p (PubMed:23093941). Interacts with TUT4 and, to a lesser extent, TUT7; the interactions are RNA-dependent (PubMed:30122351). Interacts with AGO2, TNRC6B and UPF1; the interactions are direct and RNA-dependent (PubMed:24726324). Interacts with FMR1; this interaction is direct, occurs in an RNA-dependent manner on polysomes and induces association of MOV10 with RNAs (PubMed:25464849). Interacts with SHFL; the interaction increases in presence of RNA (PubMed:27974568). Interacts with DHX34; the interaction is RNA-independent (PubMed:25220460). Interacts with IKBKE (PubMed:27016603, PubMed:35157734). Interacts with RBM46 (By similarity).</text>
</comment>
<comment type="subunit">
    <text evidence="6">(Microbial infection) Interacts with the human hepatitis delta virus (HDV) antigen HDAg.</text>
</comment>
<comment type="subunit">
    <text evidence="7">(Microbial infection) Interacts with HIV-1 protein GAG.</text>
</comment>
<comment type="interaction">
    <interactant intactId="EBI-1055820">
        <id>Q9HCE1</id>
    </interactant>
    <interactant intactId="EBI-2341576">
        <id>P35226</id>
        <label>BMI1</label>
    </interactant>
    <organismsDiffer>false</organismsDiffer>
    <experiments>4</experiments>
</comment>
<comment type="interaction">
    <interactant intactId="EBI-1055820">
        <id>Q9HCE1</id>
    </interactant>
    <interactant intactId="EBI-3951758">
        <id>O95503</id>
        <label>CBX6</label>
    </interactant>
    <organismsDiffer>false</organismsDiffer>
    <experiments>4</experiments>
</comment>
<comment type="interaction">
    <interactant intactId="EBI-1055820">
        <id>Q9HCE1</id>
    </interactant>
    <interactant intactId="EBI-3923843">
        <id>O95931</id>
        <label>CBX7</label>
    </interactant>
    <organismsDiffer>false</organismsDiffer>
    <experiments>6</experiments>
</comment>
<comment type="interaction">
    <interactant intactId="EBI-1055820">
        <id>Q9HCE1</id>
    </interactant>
    <interactant intactId="EBI-712912">
        <id>Q9HC52</id>
        <label>CBX8</label>
    </interactant>
    <organismsDiffer>false</organismsDiffer>
    <experiments>5</experiments>
</comment>
<comment type="interaction">
    <interactant intactId="EBI-1055820">
        <id>Q9HCE1</id>
    </interactant>
    <interactant intactId="EBI-311012">
        <id>O94986</id>
        <label>CEP152</label>
    </interactant>
    <organismsDiffer>false</organismsDiffer>
    <experiments>3</experiments>
</comment>
<comment type="interaction">
    <interactant intactId="EBI-1055820">
        <id>Q9HCE1</id>
    </interactant>
    <interactant intactId="EBI-640775">
        <id>P19525</id>
        <label>EIF2AK2</label>
    </interactant>
    <organismsDiffer>false</organismsDiffer>
    <experiments>3</experiments>
</comment>
<comment type="interaction">
    <interactant intactId="EBI-1055820">
        <id>Q9HCE1</id>
    </interactant>
    <interactant intactId="EBI-1053892">
        <id>Q9NZI8</id>
        <label>IGF2BP1</label>
    </interactant>
    <organismsDiffer>false</organismsDiffer>
    <experiments>2</experiments>
</comment>
<comment type="interaction">
    <interactant intactId="EBI-1055820">
        <id>Q9HCE1</id>
    </interactant>
    <interactant intactId="EBI-2129767">
        <id>P35227</id>
        <label>PCGF2</label>
    </interactant>
    <organismsDiffer>false</organismsDiffer>
    <experiments>2</experiments>
</comment>
<comment type="interaction">
    <interactant intactId="EBI-1055820">
        <id>Q9HCE1</id>
    </interactant>
    <interactant intactId="EBI-2820828">
        <id>Q01085</id>
        <label>TIAL1</label>
    </interactant>
    <organismsDiffer>false</organismsDiffer>
    <experiments>2</experiments>
</comment>
<comment type="interaction">
    <interactant intactId="EBI-1055820">
        <id>Q9HCE1</id>
    </interactant>
    <interactant intactId="EBI-1216533">
        <id>Q8VDS3</id>
        <label>Cbx7</label>
    </interactant>
    <organismsDiffer>true</organismsDiffer>
    <experiments>4</experiments>
</comment>
<comment type="interaction">
    <interactant intactId="EBI-1055820">
        <id>Q9HCE1</id>
    </interactant>
    <interactant intactId="EBI-25475856">
        <id>P0DTC9</id>
        <label>N</label>
    </interactant>
    <organismsDiffer>true</organismsDiffer>
    <experiments>11</experiments>
</comment>
<comment type="interaction">
    <interactant intactId="EBI-1055820">
        <id>Q9HCE1</id>
    </interactant>
    <interactant intactId="EBI-15709810">
        <id>P0C6L3</id>
    </interactant>
    <organismsDiffer>true</organismsDiffer>
    <experiments>2</experiments>
</comment>
<comment type="subcellular location">
    <subcellularLocation>
        <location evidence="4 11 15 17">Cytoplasm</location>
        <location evidence="4 11 15 17">P-body</location>
    </subcellularLocation>
    <subcellularLocation>
        <location evidence="17">Cytoplasm</location>
        <location evidence="17">Cytoplasmic ribonucleoprotein granule</location>
    </subcellularLocation>
    <subcellularLocation>
        <location evidence="9">Cytoplasm</location>
        <location evidence="9">Stress granule</location>
    </subcellularLocation>
    <subcellularLocation>
        <location evidence="2">Nucleus</location>
    </subcellularLocation>
    <subcellularLocation>
        <location evidence="2">Cytoplasm</location>
    </subcellularLocation>
    <text evidence="2 15 17">Co-enriched in cytoplasmic foci with TUT4 (PubMed:30122351). In developing neurons, localizes both in nucleus and cytoplasm, but in the adulthood it is only cytoplasmic (By similarity). After infection, relocalizes to the DENV replication complex in perinuclear regions (PubMed:27974568).</text>
</comment>
<comment type="alternative products">
    <event type="alternative splicing"/>
    <isoform>
        <id>Q9HCE1-1</id>
        <name>1</name>
        <sequence type="displayed"/>
    </isoform>
    <isoform>
        <id>Q9HCE1-2</id>
        <name>2</name>
        <sequence type="described" ref="VSP_010943 VSP_010944"/>
    </isoform>
    <isoform>
        <id>Q9HCE1-3</id>
        <name>3</name>
        <sequence type="described" ref="VSP_037305 VSP_037306"/>
    </isoform>
</comment>
<comment type="induction">
    <text evidence="20">By herpes simplex 1/HHV-1 virus infection.</text>
</comment>
<comment type="PTM">
    <text evidence="19">Ubiquitinated by the DCX(DCAF12) complex that specifically recognizes the glutamate-leucine (Glu-Leu) degron at the C-terminus, leading to its degradation.</text>
</comment>
<comment type="PTM">
    <text evidence="14">(Microbial infection) Cleaved and targeted for degradation by picornavirus proteases.</text>
</comment>
<comment type="similarity">
    <text evidence="24">Belongs to the DNA2/NAM7 helicase family. SDE3 subfamily.</text>
</comment>
<comment type="sequence caution" evidence="24">
    <conflict type="erroneous translation">
        <sequence resource="EMBL-CDS" id="BAB13457"/>
    </conflict>
    <text>Wrong choice of CDS.</text>
</comment>
<comment type="sequence caution" evidence="24">
    <conflict type="erroneous initiation">
        <sequence resource="EMBL-CDS" id="BAB85000"/>
    </conflict>
    <text>Extended N-terminus.</text>
</comment>
<accession>Q9HCE1</accession>
<accession>Q5JR03</accession>
<accession>Q8TEF0</accession>
<accession>Q9BSY3</accession>
<accession>Q9BUJ9</accession>
<feature type="chain" id="PRO_0000080704" description="Helicase MOV-10">
    <location>
        <begin position="1"/>
        <end position="1003"/>
    </location>
</feature>
<feature type="region of interest" description="Interaction with AGO2 and APOBEC3G" evidence="8">
    <location>
        <begin position="921"/>
        <end position="965"/>
    </location>
</feature>
<feature type="region of interest" description="Disordered" evidence="3">
    <location>
        <begin position="966"/>
        <end position="1003"/>
    </location>
</feature>
<feature type="short sequence motif" description="DEAG box">
    <location>
        <begin position="645"/>
        <end position="648"/>
    </location>
</feature>
<feature type="compositionally biased region" description="Basic and acidic residues" evidence="3">
    <location>
        <begin position="976"/>
        <end position="988"/>
    </location>
</feature>
<feature type="binding site" evidence="1">
    <location>
        <begin position="524"/>
        <end position="531"/>
    </location>
    <ligand>
        <name>ATP</name>
        <dbReference type="ChEBI" id="CHEBI:30616"/>
    </ligand>
</feature>
<feature type="modified residue" description="N6-acetyllysine" evidence="28">
    <location>
        <position position="148"/>
    </location>
</feature>
<feature type="modified residue" description="Phosphothreonine" evidence="26 30">
    <location>
        <position position="160"/>
    </location>
</feature>
<feature type="modified residue" description="Phosphothreonine" evidence="27 29">
    <location>
        <position position="254"/>
    </location>
</feature>
<feature type="modified residue" description="Phosphoserine" evidence="30">
    <location>
        <position position="432"/>
    </location>
</feature>
<feature type="modified residue" description="Phosphoserine" evidence="29 31">
    <location>
        <position position="969"/>
    </location>
</feature>
<feature type="modified residue" description="Phosphoserine" evidence="31">
    <location>
        <position position="977"/>
    </location>
</feature>
<feature type="splice variant" id="VSP_037305" description="In isoform 3." evidence="21">
    <original>FGTPAPGFSS</original>
    <variation>LASSKSILQS</variation>
    <location>
        <begin position="47"/>
        <end position="56"/>
    </location>
</feature>
<feature type="splice variant" id="VSP_037306" description="In isoform 3." evidence="21">
    <location>
        <begin position="57"/>
        <end position="1003"/>
    </location>
</feature>
<feature type="splice variant" id="VSP_010943" description="In isoform 2." evidence="23">
    <original>EKIRYCITKLDRELRGLDDIKDLKVGSVEEFQGQERSVILISTVRSSQSFVQLDLDFNLGFLK</original>
    <variation>RSSVTSKGGAPPPDGTSLISRPLGRGSRSLGLCWLRISEEHQGQLPPPFVPQLPGLLPGSLLH</variation>
    <location>
        <begin position="838"/>
        <end position="900"/>
    </location>
</feature>
<feature type="splice variant" id="VSP_010944" description="In isoform 2." evidence="23">
    <location>
        <begin position="901"/>
        <end position="1003"/>
    </location>
</feature>
<feature type="mutagenesis site" description="About 70% more antiviral activity against encephalomyocarditis virus replication; when associated with A-869." evidence="14">
    <original>Q</original>
    <variation>A</variation>
    <location>
        <position position="129"/>
    </location>
</feature>
<feature type="mutagenesis site" description="Abolishes 5' to 3' directional unwinding activity. Abolishes inhibition of RNA chaperonne activity of LIRE1. No effect on interaction with UPF1." evidence="11 17">
    <original>K</original>
    <variation>A</variation>
    <location>
        <position position="530"/>
    </location>
</feature>
<feature type="mutagenesis site" description="Attenuated anti-HBV activity." evidence="18">
    <original>K</original>
    <variation>R</variation>
    <location>
        <position position="530"/>
    </location>
</feature>
<feature type="mutagenesis site" description="Abolishes 5' to 3' directional unwinding activity." evidence="11">
    <original>D</original>
    <variation>N</variation>
    <location>
        <position position="645"/>
    </location>
</feature>
<feature type="mutagenesis site" description="Almost complete loss of the ability to prevent the degradation of APOBEC3G mediated by HIV-1 Vif. Attenuated anti-HBV activity." evidence="16 18">
    <original>E</original>
    <variation>Q</variation>
    <location>
        <position position="646"/>
    </location>
</feature>
<feature type="mutagenesis site" description="About 70% more antiviral activity against encephalomyocarditis virus replication; when associated with A-129." evidence="14">
    <original>Q</original>
    <variation>A</variation>
    <location>
        <position position="869"/>
    </location>
</feature>
<feature type="mutagenesis site" description="Loss of interaction with DCAF12 and proteasomal degradation." evidence="19">
    <original>E</original>
    <variation>X</variation>
    <location>
        <position position="1002"/>
    </location>
</feature>
<feature type="sequence conflict" description="In Ref. 4; AL833353." evidence="24" ref="4">
    <original>D</original>
    <variation>N</variation>
    <location>
        <position position="98"/>
    </location>
</feature>
<feature type="sequence conflict" description="In Ref. 4; AL833353." evidence="24" ref="4">
    <original>A</original>
    <variation>T</variation>
    <location>
        <position position="248"/>
    </location>
</feature>
<feature type="sequence conflict" description="In Ref. 4; AL833353." evidence="24" ref="4">
    <original>S</original>
    <variation>T</variation>
    <location>
        <position position="814"/>
    </location>
</feature>
<gene>
    <name evidence="25" type="primary">MOV10</name>
    <name type="synonym">KIAA1631</name>
</gene>
<protein>
    <recommendedName>
        <fullName evidence="24">Helicase MOV-10</fullName>
        <ecNumber evidence="11">3.6.4.13</ecNumber>
    </recommendedName>
    <alternativeName>
        <fullName evidence="22">Armitage homolog</fullName>
    </alternativeName>
    <alternativeName>
        <fullName>Moloney leukemia virus 10 protein</fullName>
    </alternativeName>
</protein>
<reference key="1">
    <citation type="journal article" date="2000" name="DNA Res.">
        <title>Prediction of the coding sequences of unidentified human genes. XVIII. The complete sequences of 100 new cDNA clones from brain which code for large proteins in vitro.</title>
        <authorList>
            <person name="Nagase T."/>
            <person name="Kikuno R."/>
            <person name="Nakayama M."/>
            <person name="Hirosawa M."/>
            <person name="Ohara O."/>
        </authorList>
    </citation>
    <scope>NUCLEOTIDE SEQUENCE [LARGE SCALE MRNA] (ISOFORM 3)</scope>
    <source>
        <tissue>Brain</tissue>
    </source>
</reference>
<reference key="2">
    <citation type="journal article" date="2002" name="DNA Res.">
        <title>Construction of expression-ready cDNA clones for KIAA genes: manual curation of 330 KIAA cDNA clones.</title>
        <authorList>
            <person name="Nakajima D."/>
            <person name="Okazaki N."/>
            <person name="Yamakawa H."/>
            <person name="Kikuno R."/>
            <person name="Ohara O."/>
            <person name="Nagase T."/>
        </authorList>
    </citation>
    <scope>SEQUENCE REVISION</scope>
</reference>
<reference key="3">
    <citation type="submission" date="2002-01" db="EMBL/GenBank/DDBJ databases">
        <title>The nucleotide sequence of a long cDNA clone isolated from human spleen.</title>
        <authorList>
            <person name="Jikuya H."/>
            <person name="Takano J."/>
            <person name="Nomura N."/>
            <person name="Kikuno R."/>
            <person name="Nagase T."/>
            <person name="Ohara O."/>
        </authorList>
    </citation>
    <scope>NUCLEOTIDE SEQUENCE [LARGE SCALE MRNA] (ISOFORM 2)</scope>
    <source>
        <tissue>Spleen</tissue>
    </source>
</reference>
<reference key="4">
    <citation type="journal article" date="2007" name="BMC Genomics">
        <title>The full-ORF clone resource of the German cDNA consortium.</title>
        <authorList>
            <person name="Bechtel S."/>
            <person name="Rosenfelder H."/>
            <person name="Duda A."/>
            <person name="Schmidt C.P."/>
            <person name="Ernst U."/>
            <person name="Wellenreuther R."/>
            <person name="Mehrle A."/>
            <person name="Schuster C."/>
            <person name="Bahr A."/>
            <person name="Bloecker H."/>
            <person name="Heubner D."/>
            <person name="Hoerlein A."/>
            <person name="Michel G."/>
            <person name="Wedler H."/>
            <person name="Koehrer K."/>
            <person name="Ottenwaelder B."/>
            <person name="Poustka A."/>
            <person name="Wiemann S."/>
            <person name="Schupp I."/>
        </authorList>
    </citation>
    <scope>NUCLEOTIDE SEQUENCE [LARGE SCALE MRNA] (ISOFORM 1)</scope>
    <source>
        <tissue>Testis</tissue>
    </source>
</reference>
<reference key="5">
    <citation type="journal article" date="2006" name="Nature">
        <title>The DNA sequence and biological annotation of human chromosome 1.</title>
        <authorList>
            <person name="Gregory S.G."/>
            <person name="Barlow K.F."/>
            <person name="McLay K.E."/>
            <person name="Kaul R."/>
            <person name="Swarbreck D."/>
            <person name="Dunham A."/>
            <person name="Scott C.E."/>
            <person name="Howe K.L."/>
            <person name="Woodfine K."/>
            <person name="Spencer C.C.A."/>
            <person name="Jones M.C."/>
            <person name="Gillson C."/>
            <person name="Searle S."/>
            <person name="Zhou Y."/>
            <person name="Kokocinski F."/>
            <person name="McDonald L."/>
            <person name="Evans R."/>
            <person name="Phillips K."/>
            <person name="Atkinson A."/>
            <person name="Cooper R."/>
            <person name="Jones C."/>
            <person name="Hall R.E."/>
            <person name="Andrews T.D."/>
            <person name="Lloyd C."/>
            <person name="Ainscough R."/>
            <person name="Almeida J.P."/>
            <person name="Ambrose K.D."/>
            <person name="Anderson F."/>
            <person name="Andrew R.W."/>
            <person name="Ashwell R.I.S."/>
            <person name="Aubin K."/>
            <person name="Babbage A.K."/>
            <person name="Bagguley C.L."/>
            <person name="Bailey J."/>
            <person name="Beasley H."/>
            <person name="Bethel G."/>
            <person name="Bird C.P."/>
            <person name="Bray-Allen S."/>
            <person name="Brown J.Y."/>
            <person name="Brown A.J."/>
            <person name="Buckley D."/>
            <person name="Burton J."/>
            <person name="Bye J."/>
            <person name="Carder C."/>
            <person name="Chapman J.C."/>
            <person name="Clark S.Y."/>
            <person name="Clarke G."/>
            <person name="Clee C."/>
            <person name="Cobley V."/>
            <person name="Collier R.E."/>
            <person name="Corby N."/>
            <person name="Coville G.J."/>
            <person name="Davies J."/>
            <person name="Deadman R."/>
            <person name="Dunn M."/>
            <person name="Earthrowl M."/>
            <person name="Ellington A.G."/>
            <person name="Errington H."/>
            <person name="Frankish A."/>
            <person name="Frankland J."/>
            <person name="French L."/>
            <person name="Garner P."/>
            <person name="Garnett J."/>
            <person name="Gay L."/>
            <person name="Ghori M.R.J."/>
            <person name="Gibson R."/>
            <person name="Gilby L.M."/>
            <person name="Gillett W."/>
            <person name="Glithero R.J."/>
            <person name="Grafham D.V."/>
            <person name="Griffiths C."/>
            <person name="Griffiths-Jones S."/>
            <person name="Grocock R."/>
            <person name="Hammond S."/>
            <person name="Harrison E.S.I."/>
            <person name="Hart E."/>
            <person name="Haugen E."/>
            <person name="Heath P.D."/>
            <person name="Holmes S."/>
            <person name="Holt K."/>
            <person name="Howden P.J."/>
            <person name="Hunt A.R."/>
            <person name="Hunt S.E."/>
            <person name="Hunter G."/>
            <person name="Isherwood J."/>
            <person name="James R."/>
            <person name="Johnson C."/>
            <person name="Johnson D."/>
            <person name="Joy A."/>
            <person name="Kay M."/>
            <person name="Kershaw J.K."/>
            <person name="Kibukawa M."/>
            <person name="Kimberley A.M."/>
            <person name="King A."/>
            <person name="Knights A.J."/>
            <person name="Lad H."/>
            <person name="Laird G."/>
            <person name="Lawlor S."/>
            <person name="Leongamornlert D.A."/>
            <person name="Lloyd D.M."/>
            <person name="Loveland J."/>
            <person name="Lovell J."/>
            <person name="Lush M.J."/>
            <person name="Lyne R."/>
            <person name="Martin S."/>
            <person name="Mashreghi-Mohammadi M."/>
            <person name="Matthews L."/>
            <person name="Matthews N.S.W."/>
            <person name="McLaren S."/>
            <person name="Milne S."/>
            <person name="Mistry S."/>
            <person name="Moore M.J.F."/>
            <person name="Nickerson T."/>
            <person name="O'Dell C.N."/>
            <person name="Oliver K."/>
            <person name="Palmeiri A."/>
            <person name="Palmer S.A."/>
            <person name="Parker A."/>
            <person name="Patel D."/>
            <person name="Pearce A.V."/>
            <person name="Peck A.I."/>
            <person name="Pelan S."/>
            <person name="Phelps K."/>
            <person name="Phillimore B.J."/>
            <person name="Plumb R."/>
            <person name="Rajan J."/>
            <person name="Raymond C."/>
            <person name="Rouse G."/>
            <person name="Saenphimmachak C."/>
            <person name="Sehra H.K."/>
            <person name="Sheridan E."/>
            <person name="Shownkeen R."/>
            <person name="Sims S."/>
            <person name="Skuce C.D."/>
            <person name="Smith M."/>
            <person name="Steward C."/>
            <person name="Subramanian S."/>
            <person name="Sycamore N."/>
            <person name="Tracey A."/>
            <person name="Tromans A."/>
            <person name="Van Helmond Z."/>
            <person name="Wall M."/>
            <person name="Wallis J.M."/>
            <person name="White S."/>
            <person name="Whitehead S.L."/>
            <person name="Wilkinson J.E."/>
            <person name="Willey D.L."/>
            <person name="Williams H."/>
            <person name="Wilming L."/>
            <person name="Wray P.W."/>
            <person name="Wu Z."/>
            <person name="Coulson A."/>
            <person name="Vaudin M."/>
            <person name="Sulston J.E."/>
            <person name="Durbin R.M."/>
            <person name="Hubbard T."/>
            <person name="Wooster R."/>
            <person name="Dunham I."/>
            <person name="Carter N.P."/>
            <person name="McVean G."/>
            <person name="Ross M.T."/>
            <person name="Harrow J."/>
            <person name="Olson M.V."/>
            <person name="Beck S."/>
            <person name="Rogers J."/>
            <person name="Bentley D.R."/>
        </authorList>
    </citation>
    <scope>NUCLEOTIDE SEQUENCE [LARGE SCALE GENOMIC DNA]</scope>
</reference>
<reference key="6">
    <citation type="journal article" date="2004" name="Genome Res.">
        <title>The status, quality, and expansion of the NIH full-length cDNA project: the Mammalian Gene Collection (MGC).</title>
        <authorList>
            <consortium name="The MGC Project Team"/>
        </authorList>
    </citation>
    <scope>NUCLEOTIDE SEQUENCE [LARGE SCALE MRNA] (ISOFORM 1)</scope>
    <source>
        <tissue>Muscle</tissue>
        <tissue>Placenta</tissue>
        <tissue>Skin</tissue>
    </source>
</reference>
<reference key="7">
    <citation type="journal article" date="2005" name="Curr. Biol.">
        <title>Identification of novel argonaute-associated proteins.</title>
        <authorList>
            <person name="Meister G."/>
            <person name="Landthaler M."/>
            <person name="Peters L."/>
            <person name="Chen P.Y."/>
            <person name="Urlaub H."/>
            <person name="Luehrmann R."/>
            <person name="Tuschl T."/>
        </authorList>
    </citation>
    <scope>IDENTIFICATION BY MASS SPECTROMETRY</scope>
    <scope>FUNCTION</scope>
    <scope>INTERACTION WITH AGO1 AND AGO2</scope>
    <scope>SUBCELLULAR LOCATION</scope>
</reference>
<reference key="8">
    <citation type="journal article" date="2007" name="Nature">
        <title>MicroRNA silencing through RISC recruitment of eIF6.</title>
        <authorList>
            <person name="Chendrimada T.P."/>
            <person name="Finn K.J."/>
            <person name="Ji X."/>
            <person name="Baillat D."/>
            <person name="Gregory R.I."/>
            <person name="Liebhaber S.A."/>
            <person name="Pasquinelli A.E."/>
            <person name="Shiekhattar R."/>
        </authorList>
    </citation>
    <scope>IDENTIFICATION BY MASS SPECTROMETRY</scope>
    <scope>FUNCTION</scope>
    <scope>INTERACTION WITH DICER1; AGO2; EIF6; RPL7A AND TARBP2</scope>
    <scope>ASSOCIATION WITH THE 60S RIBOSOME</scope>
</reference>
<reference key="9">
    <citation type="journal article" date="2007" name="Science">
        <title>ATM and ATR substrate analysis reveals extensive protein networks responsive to DNA damage.</title>
        <authorList>
            <person name="Matsuoka S."/>
            <person name="Ballif B.A."/>
            <person name="Smogorzewska A."/>
            <person name="McDonald E.R. III"/>
            <person name="Hurov K.E."/>
            <person name="Luo J."/>
            <person name="Bakalarski C.E."/>
            <person name="Zhao Z."/>
            <person name="Solimini N."/>
            <person name="Lerenthal Y."/>
            <person name="Shiloh Y."/>
            <person name="Gygi S.P."/>
            <person name="Elledge S.J."/>
        </authorList>
    </citation>
    <scope>PHOSPHORYLATION [LARGE SCALE ANALYSIS] AT THR-160</scope>
    <scope>IDENTIFICATION BY MASS SPECTROMETRY [LARGE SCALE ANALYSIS]</scope>
    <source>
        <tissue>Embryonic kidney</tissue>
    </source>
</reference>
<reference key="10">
    <citation type="journal article" date="2008" name="Nat. Struct. Mol. Biol.">
        <title>Capped small RNAs and MOV10 in human hepatitis delta virus replication.</title>
        <authorList>
            <person name="Haussecker D."/>
            <person name="Cao D."/>
            <person name="Huang Y."/>
            <person name="Parameswaran P."/>
            <person name="Fire A.Z."/>
            <person name="Kay M.A."/>
        </authorList>
    </citation>
    <scope>IDENTIFICATION BY MASS SPECTROMETRY</scope>
    <scope>FUNCTION (MICROBIAL INFECTION)</scope>
    <scope>RNA-BINDING</scope>
    <scope>INTERACTION WITH HDAG (MICROBIAL INFECTION)</scope>
</reference>
<reference key="11">
    <citation type="journal article" date="2008" name="Proc. Natl. Acad. Sci. U.S.A.">
        <title>A quantitative atlas of mitotic phosphorylation.</title>
        <authorList>
            <person name="Dephoure N."/>
            <person name="Zhou C."/>
            <person name="Villen J."/>
            <person name="Beausoleil S.A."/>
            <person name="Bakalarski C.E."/>
            <person name="Elledge S.J."/>
            <person name="Gygi S.P."/>
        </authorList>
    </citation>
    <scope>PHOSPHORYLATION [LARGE SCALE ANALYSIS] AT THR-254</scope>
    <scope>IDENTIFICATION BY MASS SPECTROMETRY [LARGE SCALE ANALYSIS]</scope>
    <source>
        <tissue>Cervix carcinoma</tissue>
    </source>
</reference>
<reference key="12">
    <citation type="journal article" date="2009" name="Science">
        <title>Lysine acetylation targets protein complexes and co-regulates major cellular functions.</title>
        <authorList>
            <person name="Choudhary C."/>
            <person name="Kumar C."/>
            <person name="Gnad F."/>
            <person name="Nielsen M.L."/>
            <person name="Rehman M."/>
            <person name="Walther T.C."/>
            <person name="Olsen J.V."/>
            <person name="Mann M."/>
        </authorList>
    </citation>
    <scope>ACETYLATION [LARGE SCALE ANALYSIS] AT LYS-148</scope>
    <scope>IDENTIFICATION BY MASS SPECTROMETRY [LARGE SCALE ANALYSIS]</scope>
</reference>
<reference key="13">
    <citation type="journal article" date="2010" name="Sci. Signal.">
        <title>Quantitative phosphoproteomics reveals widespread full phosphorylation site occupancy during mitosis.</title>
        <authorList>
            <person name="Olsen J.V."/>
            <person name="Vermeulen M."/>
            <person name="Santamaria A."/>
            <person name="Kumar C."/>
            <person name="Miller M.L."/>
            <person name="Jensen L.J."/>
            <person name="Gnad F."/>
            <person name="Cox J."/>
            <person name="Jensen T.S."/>
            <person name="Nigg E.A."/>
            <person name="Brunak S."/>
            <person name="Mann M."/>
        </authorList>
    </citation>
    <scope>PHOSPHORYLATION [LARGE SCALE ANALYSIS] AT THR-254 AND SER-969</scope>
    <scope>IDENTIFICATION BY MASS SPECTROMETRY [LARGE SCALE ANALYSIS]</scope>
    <source>
        <tissue>Cervix carcinoma</tissue>
    </source>
</reference>
<reference key="14">
    <citation type="journal article" date="2010" name="J. Biol. Chem.">
        <title>Moloney leukemia virus 10 (MOV10) protein inhibits retrovirus replication.</title>
        <authorList>
            <person name="Wang X."/>
            <person name="Han Y."/>
            <person name="Dang Y."/>
            <person name="Fu W."/>
            <person name="Zhou T."/>
            <person name="Ptak R.G."/>
            <person name="Zheng Y.H."/>
        </authorList>
    </citation>
    <scope>FUNCTION</scope>
    <scope>INTERACTION WITH HIV-1 GAG (MICROBIAL INFECTION)</scope>
</reference>
<reference key="15">
    <citation type="journal article" date="2011" name="BMC Syst. Biol.">
        <title>Initial characterization of the human central proteome.</title>
        <authorList>
            <person name="Burkard T.R."/>
            <person name="Planyavsky M."/>
            <person name="Kaupe I."/>
            <person name="Breitwieser F.P."/>
            <person name="Buerckstuemmer T."/>
            <person name="Bennett K.L."/>
            <person name="Superti-Furga G."/>
            <person name="Colinge J."/>
        </authorList>
    </citation>
    <scope>IDENTIFICATION BY MASS SPECTROMETRY [LARGE SCALE ANALYSIS]</scope>
</reference>
<reference key="16">
    <citation type="journal article" date="2012" name="J. Biol. Chem.">
        <title>APOBEC3G inhibits microRNA-mediated repression of translation by interfering with the interaction between Argonaute-2 and MOV10.</title>
        <authorList>
            <person name="Liu C."/>
            <person name="Zhang X."/>
            <person name="Huang F."/>
            <person name="Yang B."/>
            <person name="Li J."/>
            <person name="Liu B."/>
            <person name="Luo H."/>
            <person name="Zhang P."/>
            <person name="Zhang H."/>
        </authorList>
    </citation>
    <scope>FUNCTION</scope>
    <scope>INTERACTION WITH APOBEC3G AND AGO2</scope>
</reference>
<reference key="17">
    <citation type="journal article" date="2012" name="PLoS Genet.">
        <title>MOV10 RNA helicase is a potent inhibitor of retrotransposition in cells.</title>
        <authorList>
            <person name="Goodier J.L."/>
            <person name="Cheung L.E."/>
            <person name="Kazazian H.H. Jr."/>
        </authorList>
    </citation>
    <scope>FUNCTION</scope>
    <scope>SUBCELLULAR LOCATION</scope>
    <scope>RNA-BINDING</scope>
    <scope>INTERACTION WITH L1RE1</scope>
</reference>
<reference key="18">
    <citation type="journal article" date="2013" name="J. Proteome Res.">
        <title>Toward a comprehensive characterization of a human cancer cell phosphoproteome.</title>
        <authorList>
            <person name="Zhou H."/>
            <person name="Di Palma S."/>
            <person name="Preisinger C."/>
            <person name="Peng M."/>
            <person name="Polat A.N."/>
            <person name="Heck A.J."/>
            <person name="Mohammed S."/>
        </authorList>
    </citation>
    <scope>PHOSPHORYLATION [LARGE SCALE ANALYSIS] AT THR-160 AND SER-432</scope>
    <scope>IDENTIFICATION BY MASS SPECTROMETRY [LARGE SCALE ANALYSIS]</scope>
    <source>
        <tissue>Cervix carcinoma</tissue>
        <tissue>Erythroleukemia</tissue>
    </source>
</reference>
<reference key="19">
    <citation type="journal article" date="2013" name="Nucleic Acids Res.">
        <title>The mammalian TRIM-NHL protein TRIM71/LIN-41 is a repressor of mRNA function.</title>
        <authorList>
            <person name="Loedige I."/>
            <person name="Gaidatzis D."/>
            <person name="Sack R."/>
            <person name="Meister G."/>
            <person name="Filipowicz W."/>
        </authorList>
    </citation>
    <scope>INTERACTION WITH TRIM71</scope>
</reference>
<reference key="20">
    <citation type="journal article" date="2014" name="Cell Rep.">
        <title>The RNA helicase DHX34 activates NMD by promoting a transition from the surveillance to the decay-inducing complex.</title>
        <authorList>
            <person name="Hug N."/>
            <person name="Caceres J.F."/>
        </authorList>
    </citation>
    <scope>INTERACTION WITH DHX34</scope>
</reference>
<reference key="21">
    <citation type="journal article" date="2014" name="Cell Rep.">
        <title>MOV10 and FMRP regulate AGO2 association with microRNA recognition elements.</title>
        <authorList>
            <person name="Kenny P.J."/>
            <person name="Zhou H."/>
            <person name="Kim M."/>
            <person name="Skariah G."/>
            <person name="Khetani R.S."/>
            <person name="Drnevich J."/>
            <person name="Arcila M.L."/>
            <person name="Kosik K.S."/>
            <person name="Ceman S."/>
        </authorList>
    </citation>
    <scope>FUNCTION</scope>
    <scope>INTERACTION WITH FMR1</scope>
    <scope>RNA-BINDING</scope>
</reference>
<reference key="22">
    <citation type="journal article" date="2014" name="Mol. Cell">
        <title>MOV10 Is a 5' to 3' RNA helicase contributing to UPF1 mRNA target degradation by translocation along 3' UTRs.</title>
        <authorList>
            <person name="Gregersen L.H."/>
            <person name="Schueler M."/>
            <person name="Munschauer M."/>
            <person name="Mastrobuoni G."/>
            <person name="Chen W."/>
            <person name="Kempa S."/>
            <person name="Dieterich C."/>
            <person name="Landthaler M."/>
        </authorList>
    </citation>
    <scope>FUNCTION</scope>
    <scope>CATALYTIC ACTIVITY</scope>
    <scope>MUTAGENESIS OF LYS-530 AND ASP-645</scope>
    <scope>SUBCELLULAR LOCATION</scope>
    <scope>RNA-BINDING</scope>
    <scope>INTERACTION WITH AGO2; TNRC6B AND UPF1</scope>
</reference>
<reference key="23">
    <citation type="journal article" date="2014" name="J. Proteomics">
        <title>An enzyme assisted RP-RPLC approach for in-depth analysis of human liver phosphoproteome.</title>
        <authorList>
            <person name="Bian Y."/>
            <person name="Song C."/>
            <person name="Cheng K."/>
            <person name="Dong M."/>
            <person name="Wang F."/>
            <person name="Huang J."/>
            <person name="Sun D."/>
            <person name="Wang L."/>
            <person name="Ye M."/>
            <person name="Zou H."/>
        </authorList>
    </citation>
    <scope>PHOSPHORYLATION [LARGE SCALE ANALYSIS] AT SER-969 AND SER-977</scope>
    <scope>IDENTIFICATION BY MASS SPECTROMETRY [LARGE SCALE ANALYSIS]</scope>
    <source>
        <tissue>Liver</tissue>
    </source>
</reference>
<reference key="24">
    <citation type="journal article" date="2017" name="J. Virol.">
        <title>IRAV (FLJ11286), an Interferon-Stimulated Gene with Antiviral Activity against Dengue Virus, Interacts with MOV10.</title>
        <authorList>
            <person name="Balinsky C.A."/>
            <person name="Schmeisser H."/>
            <person name="Wells A.I."/>
            <person name="Ganesan S."/>
            <person name="Jin T."/>
            <person name="Singh K."/>
            <person name="Zoon K.C."/>
        </authorList>
    </citation>
    <scope>FUNCTION</scope>
    <scope>SUBCELLULAR LOCATION</scope>
    <scope>INTERACTION WITH SHFL</scope>
</reference>
<reference key="25">
    <citation type="journal article" date="2018" name="Cell">
        <title>Uridylation by TUT4/7 Restricts Retrotransposition of Human LINE-1s.</title>
        <authorList>
            <person name="Warkocki Z."/>
            <person name="Krawczyk P.S."/>
            <person name="Adamska D."/>
            <person name="Bijata K."/>
            <person name="Garcia-Perez J.L."/>
            <person name="Dziembowski A."/>
        </authorList>
    </citation>
    <scope>FUNCTION</scope>
    <scope>SUBCELLULAR LOCATION</scope>
    <scope>INTERACTION WITH TUT4 AND TUT7</scope>
    <scope>MUTAGENESIS OF LYS-530</scope>
</reference>
<reference key="26">
    <citation type="journal article" date="2016" name="J. Immunol.">
        <title>MOV10 Provides Antiviral Activity against RNA Viruses by Enhancing RIG-I-MAVS-Independent IFN Induction.</title>
        <authorList>
            <person name="Cuevas R.A."/>
            <person name="Ghosh A."/>
            <person name="Wallerath C."/>
            <person name="Hornung V."/>
            <person name="Coyne C.B."/>
            <person name="Sarkar S.N."/>
        </authorList>
    </citation>
    <scope>FUNCTION</scope>
    <scope>MUTAGENESIS OF GLN-129 AND GLN-869</scope>
    <scope>INTERACTION WITH IKBKE</scope>
    <scope>CLEAVAGE BY PICORNAVIRUS PROTEASES (MICROBIAL INFECTION)</scope>
</reference>
<reference key="27">
    <citation type="journal article" date="2017" name="Retrovirology">
        <title>Moloney leukemia virus 10 (MOV10) inhibits the degradation of APOBEC3G through interference with the Vif-mediated ubiquitin-proteasome pathway.</title>
        <authorList>
            <person name="Chen C."/>
            <person name="Ma X."/>
            <person name="Hu Q."/>
            <person name="Li X."/>
            <person name="Huang F."/>
            <person name="Zhang J."/>
            <person name="Pan T."/>
            <person name="Xia J."/>
            <person name="Liu C."/>
            <person name="Zhang H."/>
        </authorList>
    </citation>
    <scope>FUNCTION</scope>
    <scope>MUTAGENESIS OF GLU-646</scope>
</reference>
<reference key="28">
    <citation type="journal article" date="2019" name="J. Biol. Chem.">
        <title>The MOV10 helicase restricts hepatitis B virus replication by inhibiting viral reverse transcription.</title>
        <authorList>
            <person name="Liu T."/>
            <person name="Sun Q."/>
            <person name="Liu Y."/>
            <person name="Cen S."/>
            <person name="Zhang Q."/>
        </authorList>
    </citation>
    <scope>FUNCTION</scope>
    <scope>MUTAGENESIS OF LYS-530 AND GLU-646</scope>
</reference>
<reference key="29">
    <citation type="journal article" date="2021" name="Int. J. Mol. Sci.">
        <title>CRL4-DCAF12 Ubiquitin Ligase Controls MOV10 RNA Helicase during Spermatogenesis and T Cell Activation.</title>
        <authorList>
            <person name="Lidak T."/>
            <person name="Baloghova N."/>
            <person name="Korinek V."/>
            <person name="Sedlacek R."/>
            <person name="Balounova J."/>
            <person name="Kasparek P."/>
            <person name="Cermak L."/>
        </authorList>
    </citation>
    <scope>UBIQUITINATION</scope>
    <scope>MUTAGENESIS OF GLU-1002</scope>
</reference>
<reference key="30">
    <citation type="journal article" date="2022" name="PLoS Pathog.">
        <title>Host MOV10 is induced to restrict herpes simplex virus 1 lytic infection by promoting type I interferon response.</title>
        <authorList>
            <person name="Yang X."/>
            <person name="Xiang Z."/>
            <person name="Sun Z."/>
            <person name="Ji F."/>
            <person name="Ren K."/>
            <person name="Pan D."/>
        </authorList>
    </citation>
    <scope>FUNCTION</scope>
    <scope>INDUCTION BY HERPES SIMPLEX VIRUS 1 LYTIC INFECTION</scope>
    <scope>INTERACTION WITH IKBKE</scope>
</reference>